<dbReference type="EC" id="4.98.1.1" evidence="1"/>
<dbReference type="EMBL" id="CP001280">
    <property type="protein sequence ID" value="ACK52576.1"/>
    <property type="molecule type" value="Genomic_DNA"/>
</dbReference>
<dbReference type="RefSeq" id="WP_012592644.1">
    <property type="nucleotide sequence ID" value="NC_011666.1"/>
</dbReference>
<dbReference type="SMR" id="B8EJ84"/>
<dbReference type="STRING" id="395965.Msil_3692"/>
<dbReference type="KEGG" id="msl:Msil_3692"/>
<dbReference type="eggNOG" id="COG0276">
    <property type="taxonomic scope" value="Bacteria"/>
</dbReference>
<dbReference type="HOGENOM" id="CLU_018884_0_0_5"/>
<dbReference type="OrthoDB" id="9809741at2"/>
<dbReference type="UniPathway" id="UPA00252">
    <property type="reaction ID" value="UER00325"/>
</dbReference>
<dbReference type="Proteomes" id="UP000002257">
    <property type="component" value="Chromosome"/>
</dbReference>
<dbReference type="GO" id="GO:0005737">
    <property type="term" value="C:cytoplasm"/>
    <property type="evidence" value="ECO:0007669"/>
    <property type="project" value="UniProtKB-SubCell"/>
</dbReference>
<dbReference type="GO" id="GO:0004325">
    <property type="term" value="F:ferrochelatase activity"/>
    <property type="evidence" value="ECO:0007669"/>
    <property type="project" value="UniProtKB-UniRule"/>
</dbReference>
<dbReference type="GO" id="GO:0046872">
    <property type="term" value="F:metal ion binding"/>
    <property type="evidence" value="ECO:0007669"/>
    <property type="project" value="UniProtKB-KW"/>
</dbReference>
<dbReference type="GO" id="GO:0006783">
    <property type="term" value="P:heme biosynthetic process"/>
    <property type="evidence" value="ECO:0007669"/>
    <property type="project" value="UniProtKB-UniRule"/>
</dbReference>
<dbReference type="CDD" id="cd00419">
    <property type="entry name" value="Ferrochelatase_C"/>
    <property type="match status" value="1"/>
</dbReference>
<dbReference type="CDD" id="cd03411">
    <property type="entry name" value="Ferrochelatase_N"/>
    <property type="match status" value="1"/>
</dbReference>
<dbReference type="FunFam" id="3.40.50.1400:FF:000002">
    <property type="entry name" value="Ferrochelatase"/>
    <property type="match status" value="1"/>
</dbReference>
<dbReference type="Gene3D" id="3.40.50.1400">
    <property type="match status" value="2"/>
</dbReference>
<dbReference type="HAMAP" id="MF_00323">
    <property type="entry name" value="Ferrochelatase"/>
    <property type="match status" value="1"/>
</dbReference>
<dbReference type="InterPro" id="IPR001015">
    <property type="entry name" value="Ferrochelatase"/>
</dbReference>
<dbReference type="InterPro" id="IPR019772">
    <property type="entry name" value="Ferrochelatase_AS"/>
</dbReference>
<dbReference type="InterPro" id="IPR033644">
    <property type="entry name" value="Ferrochelatase_C"/>
</dbReference>
<dbReference type="InterPro" id="IPR033659">
    <property type="entry name" value="Ferrochelatase_N"/>
</dbReference>
<dbReference type="NCBIfam" id="TIGR00109">
    <property type="entry name" value="hemH"/>
    <property type="match status" value="1"/>
</dbReference>
<dbReference type="PANTHER" id="PTHR11108">
    <property type="entry name" value="FERROCHELATASE"/>
    <property type="match status" value="1"/>
</dbReference>
<dbReference type="PANTHER" id="PTHR11108:SF1">
    <property type="entry name" value="FERROCHELATASE, MITOCHONDRIAL"/>
    <property type="match status" value="1"/>
</dbReference>
<dbReference type="Pfam" id="PF00762">
    <property type="entry name" value="Ferrochelatase"/>
    <property type="match status" value="1"/>
</dbReference>
<dbReference type="SUPFAM" id="SSF53800">
    <property type="entry name" value="Chelatase"/>
    <property type="match status" value="1"/>
</dbReference>
<dbReference type="PROSITE" id="PS00534">
    <property type="entry name" value="FERROCHELATASE"/>
    <property type="match status" value="1"/>
</dbReference>
<comment type="function">
    <text evidence="1">Catalyzes the ferrous insertion into protoporphyrin IX.</text>
</comment>
<comment type="catalytic activity">
    <reaction evidence="1">
        <text>heme b + 2 H(+) = protoporphyrin IX + Fe(2+)</text>
        <dbReference type="Rhea" id="RHEA:22584"/>
        <dbReference type="ChEBI" id="CHEBI:15378"/>
        <dbReference type="ChEBI" id="CHEBI:29033"/>
        <dbReference type="ChEBI" id="CHEBI:57306"/>
        <dbReference type="ChEBI" id="CHEBI:60344"/>
        <dbReference type="EC" id="4.98.1.1"/>
    </reaction>
</comment>
<comment type="pathway">
    <text evidence="1">Porphyrin-containing compound metabolism; protoheme biosynthesis; protoheme from protoporphyrin-IX: step 1/1.</text>
</comment>
<comment type="subcellular location">
    <subcellularLocation>
        <location evidence="1">Cytoplasm</location>
    </subcellularLocation>
</comment>
<comment type="similarity">
    <text evidence="1">Belongs to the ferrochelatase family.</text>
</comment>
<keyword id="KW-0963">Cytoplasm</keyword>
<keyword id="KW-0350">Heme biosynthesis</keyword>
<keyword id="KW-0408">Iron</keyword>
<keyword id="KW-0456">Lyase</keyword>
<keyword id="KW-0479">Metal-binding</keyword>
<keyword id="KW-0627">Porphyrin biosynthesis</keyword>
<keyword id="KW-1185">Reference proteome</keyword>
<feature type="chain" id="PRO_1000189987" description="Ferrochelatase">
    <location>
        <begin position="1"/>
        <end position="348"/>
    </location>
</feature>
<feature type="binding site" evidence="1">
    <location>
        <position position="218"/>
    </location>
    <ligand>
        <name>Fe cation</name>
        <dbReference type="ChEBI" id="CHEBI:24875"/>
    </ligand>
</feature>
<feature type="binding site" evidence="1">
    <location>
        <position position="299"/>
    </location>
    <ligand>
        <name>Fe cation</name>
        <dbReference type="ChEBI" id="CHEBI:24875"/>
    </ligand>
</feature>
<name>HEMH_METSB</name>
<sequence length="348" mass="39218">MTAETAAVDARPVASSQRVGVLLVNLGTPDALGYWPVRRYLKEFLSDRRVVNTPRLIWWPILNLIILTTRPQRSSKNYETIWNSQRNESPLKTVTRSQAEQLAGSIVSGEFGAGGDIVVDWAMRYANPSILSSLQRLREQGCGRVLIVPLYPQFAGATTLSVADKVEESLARMNWRPDMRSVPPYYNDPVYIDALAQSVRAGLAALDFEPEVVLVSFHGIPKSYVEAGDPYYDQCVETWRLLRERLDFSPERCPLTFQSRFGRAEWLSPYTDETVKELARKGVRRMAVLTPGFSVDCLETISEIGVENREFFIEAGGEQFALIPCLNDSALGMKVIRHIVSRELEGWI</sequence>
<reference key="1">
    <citation type="journal article" date="2010" name="J. Bacteriol.">
        <title>Complete genome sequence of the aerobic facultative methanotroph Methylocella silvestris BL2.</title>
        <authorList>
            <person name="Chen Y."/>
            <person name="Crombie A."/>
            <person name="Rahman M.T."/>
            <person name="Dedysh S.N."/>
            <person name="Liesack W."/>
            <person name="Stott M.B."/>
            <person name="Alam M."/>
            <person name="Theisen A.R."/>
            <person name="Murrell J.C."/>
            <person name="Dunfield P.F."/>
        </authorList>
    </citation>
    <scope>NUCLEOTIDE SEQUENCE [LARGE SCALE GENOMIC DNA]</scope>
    <source>
        <strain>DSM 15510 / CIP 108128 / LMG 27833 / NCIMB 13906 / BL2</strain>
    </source>
</reference>
<organism>
    <name type="scientific">Methylocella silvestris (strain DSM 15510 / CIP 108128 / LMG 27833 / NCIMB 13906 / BL2)</name>
    <dbReference type="NCBI Taxonomy" id="395965"/>
    <lineage>
        <taxon>Bacteria</taxon>
        <taxon>Pseudomonadati</taxon>
        <taxon>Pseudomonadota</taxon>
        <taxon>Alphaproteobacteria</taxon>
        <taxon>Hyphomicrobiales</taxon>
        <taxon>Beijerinckiaceae</taxon>
        <taxon>Methylocella</taxon>
    </lineage>
</organism>
<evidence type="ECO:0000255" key="1">
    <source>
        <dbReference type="HAMAP-Rule" id="MF_00323"/>
    </source>
</evidence>
<accession>B8EJ84</accession>
<protein>
    <recommendedName>
        <fullName evidence="1">Ferrochelatase</fullName>
        <ecNumber evidence="1">4.98.1.1</ecNumber>
    </recommendedName>
    <alternativeName>
        <fullName evidence="1">Heme synthase</fullName>
    </alternativeName>
    <alternativeName>
        <fullName evidence="1">Protoheme ferro-lyase</fullName>
    </alternativeName>
</protein>
<gene>
    <name evidence="1" type="primary">hemH</name>
    <name type="ordered locus">Msil_3692</name>
</gene>
<proteinExistence type="inferred from homology"/>